<protein>
    <recommendedName>
        <fullName evidence="1">Phosphoglucosamine mutase</fullName>
        <ecNumber evidence="1">5.4.2.10</ecNumber>
    </recommendedName>
</protein>
<comment type="function">
    <text evidence="1">Catalyzes the conversion of glucosamine-6-phosphate to glucosamine-1-phosphate.</text>
</comment>
<comment type="catalytic activity">
    <reaction evidence="1">
        <text>alpha-D-glucosamine 1-phosphate = D-glucosamine 6-phosphate</text>
        <dbReference type="Rhea" id="RHEA:23424"/>
        <dbReference type="ChEBI" id="CHEBI:58516"/>
        <dbReference type="ChEBI" id="CHEBI:58725"/>
        <dbReference type="EC" id="5.4.2.10"/>
    </reaction>
</comment>
<comment type="cofactor">
    <cofactor evidence="1">
        <name>Mg(2+)</name>
        <dbReference type="ChEBI" id="CHEBI:18420"/>
    </cofactor>
    <text evidence="1">Binds 1 Mg(2+) ion per subunit.</text>
</comment>
<comment type="PTM">
    <text evidence="1">Activated by phosphorylation.</text>
</comment>
<comment type="similarity">
    <text evidence="1">Belongs to the phosphohexose mutase family.</text>
</comment>
<organism>
    <name type="scientific">Dictyoglomus thermophilum (strain ATCC 35947 / DSM 3960 / H-6-12)</name>
    <dbReference type="NCBI Taxonomy" id="309799"/>
    <lineage>
        <taxon>Bacteria</taxon>
        <taxon>Pseudomonadati</taxon>
        <taxon>Dictyoglomota</taxon>
        <taxon>Dictyoglomia</taxon>
        <taxon>Dictyoglomales</taxon>
        <taxon>Dictyoglomaceae</taxon>
        <taxon>Dictyoglomus</taxon>
    </lineage>
</organism>
<gene>
    <name evidence="1" type="primary">glmM</name>
    <name type="ordered locus">DICTH_0875</name>
</gene>
<evidence type="ECO:0000255" key="1">
    <source>
        <dbReference type="HAMAP-Rule" id="MF_01554"/>
    </source>
</evidence>
<keyword id="KW-0413">Isomerase</keyword>
<keyword id="KW-0460">Magnesium</keyword>
<keyword id="KW-0479">Metal-binding</keyword>
<keyword id="KW-0597">Phosphoprotein</keyword>
<dbReference type="EC" id="5.4.2.10" evidence="1"/>
<dbReference type="EMBL" id="CP001146">
    <property type="protein sequence ID" value="ACI18858.1"/>
    <property type="molecule type" value="Genomic_DNA"/>
</dbReference>
<dbReference type="RefSeq" id="WP_012547490.1">
    <property type="nucleotide sequence ID" value="NC_011297.1"/>
</dbReference>
<dbReference type="SMR" id="B5YDY1"/>
<dbReference type="STRING" id="309799.DICTH_0875"/>
<dbReference type="PaxDb" id="309799-DICTH_0875"/>
<dbReference type="KEGG" id="dth:DICTH_0875"/>
<dbReference type="eggNOG" id="COG1109">
    <property type="taxonomic scope" value="Bacteria"/>
</dbReference>
<dbReference type="HOGENOM" id="CLU_016950_7_0_0"/>
<dbReference type="OrthoDB" id="9803322at2"/>
<dbReference type="Proteomes" id="UP000001733">
    <property type="component" value="Chromosome"/>
</dbReference>
<dbReference type="GO" id="GO:0005829">
    <property type="term" value="C:cytosol"/>
    <property type="evidence" value="ECO:0007669"/>
    <property type="project" value="TreeGrafter"/>
</dbReference>
<dbReference type="GO" id="GO:0000287">
    <property type="term" value="F:magnesium ion binding"/>
    <property type="evidence" value="ECO:0007669"/>
    <property type="project" value="UniProtKB-UniRule"/>
</dbReference>
<dbReference type="GO" id="GO:0008966">
    <property type="term" value="F:phosphoglucosamine mutase activity"/>
    <property type="evidence" value="ECO:0007669"/>
    <property type="project" value="UniProtKB-UniRule"/>
</dbReference>
<dbReference type="GO" id="GO:0004615">
    <property type="term" value="F:phosphomannomutase activity"/>
    <property type="evidence" value="ECO:0007669"/>
    <property type="project" value="TreeGrafter"/>
</dbReference>
<dbReference type="GO" id="GO:0005975">
    <property type="term" value="P:carbohydrate metabolic process"/>
    <property type="evidence" value="ECO:0007669"/>
    <property type="project" value="InterPro"/>
</dbReference>
<dbReference type="GO" id="GO:0009252">
    <property type="term" value="P:peptidoglycan biosynthetic process"/>
    <property type="evidence" value="ECO:0007669"/>
    <property type="project" value="TreeGrafter"/>
</dbReference>
<dbReference type="GO" id="GO:0006048">
    <property type="term" value="P:UDP-N-acetylglucosamine biosynthetic process"/>
    <property type="evidence" value="ECO:0007669"/>
    <property type="project" value="TreeGrafter"/>
</dbReference>
<dbReference type="CDD" id="cd05802">
    <property type="entry name" value="GlmM"/>
    <property type="match status" value="1"/>
</dbReference>
<dbReference type="FunFam" id="3.40.120.10:FF:000001">
    <property type="entry name" value="Phosphoglucosamine mutase"/>
    <property type="match status" value="1"/>
</dbReference>
<dbReference type="FunFam" id="3.40.120.10:FF:000002">
    <property type="entry name" value="Phosphoglucosamine mutase"/>
    <property type="match status" value="1"/>
</dbReference>
<dbReference type="Gene3D" id="3.40.120.10">
    <property type="entry name" value="Alpha-D-Glucose-1,6-Bisphosphate, subunit A, domain 3"/>
    <property type="match status" value="3"/>
</dbReference>
<dbReference type="Gene3D" id="3.30.310.50">
    <property type="entry name" value="Alpha-D-phosphohexomutase, C-terminal domain"/>
    <property type="match status" value="1"/>
</dbReference>
<dbReference type="HAMAP" id="MF_01554_B">
    <property type="entry name" value="GlmM_B"/>
    <property type="match status" value="1"/>
</dbReference>
<dbReference type="InterPro" id="IPR005844">
    <property type="entry name" value="A-D-PHexomutase_a/b/a-I"/>
</dbReference>
<dbReference type="InterPro" id="IPR016055">
    <property type="entry name" value="A-D-PHexomutase_a/b/a-I/II/III"/>
</dbReference>
<dbReference type="InterPro" id="IPR005845">
    <property type="entry name" value="A-D-PHexomutase_a/b/a-II"/>
</dbReference>
<dbReference type="InterPro" id="IPR005846">
    <property type="entry name" value="A-D-PHexomutase_a/b/a-III"/>
</dbReference>
<dbReference type="InterPro" id="IPR005843">
    <property type="entry name" value="A-D-PHexomutase_C"/>
</dbReference>
<dbReference type="InterPro" id="IPR036900">
    <property type="entry name" value="A-D-PHexomutase_C_sf"/>
</dbReference>
<dbReference type="InterPro" id="IPR016066">
    <property type="entry name" value="A-D-PHexomutase_CS"/>
</dbReference>
<dbReference type="InterPro" id="IPR005841">
    <property type="entry name" value="Alpha-D-phosphohexomutase_SF"/>
</dbReference>
<dbReference type="InterPro" id="IPR006352">
    <property type="entry name" value="GlmM_bact"/>
</dbReference>
<dbReference type="InterPro" id="IPR050060">
    <property type="entry name" value="Phosphoglucosamine_mutase"/>
</dbReference>
<dbReference type="NCBIfam" id="TIGR01455">
    <property type="entry name" value="glmM"/>
    <property type="match status" value="1"/>
</dbReference>
<dbReference type="PANTHER" id="PTHR42946:SF1">
    <property type="entry name" value="PHOSPHOGLUCOMUTASE (ALPHA-D-GLUCOSE-1,6-BISPHOSPHATE-DEPENDENT)"/>
    <property type="match status" value="1"/>
</dbReference>
<dbReference type="PANTHER" id="PTHR42946">
    <property type="entry name" value="PHOSPHOHEXOSE MUTASE"/>
    <property type="match status" value="1"/>
</dbReference>
<dbReference type="Pfam" id="PF02878">
    <property type="entry name" value="PGM_PMM_I"/>
    <property type="match status" value="1"/>
</dbReference>
<dbReference type="Pfam" id="PF02879">
    <property type="entry name" value="PGM_PMM_II"/>
    <property type="match status" value="1"/>
</dbReference>
<dbReference type="Pfam" id="PF02880">
    <property type="entry name" value="PGM_PMM_III"/>
    <property type="match status" value="1"/>
</dbReference>
<dbReference type="Pfam" id="PF00408">
    <property type="entry name" value="PGM_PMM_IV"/>
    <property type="match status" value="1"/>
</dbReference>
<dbReference type="PRINTS" id="PR00509">
    <property type="entry name" value="PGMPMM"/>
</dbReference>
<dbReference type="SUPFAM" id="SSF55957">
    <property type="entry name" value="Phosphoglucomutase, C-terminal domain"/>
    <property type="match status" value="1"/>
</dbReference>
<dbReference type="SUPFAM" id="SSF53738">
    <property type="entry name" value="Phosphoglucomutase, first 3 domains"/>
    <property type="match status" value="3"/>
</dbReference>
<dbReference type="PROSITE" id="PS00710">
    <property type="entry name" value="PGM_PMM"/>
    <property type="match status" value="1"/>
</dbReference>
<reference key="1">
    <citation type="journal article" date="2014" name="Genome Announc.">
        <title>Complete Genome Sequence of the Extreme Thermophile Dictyoglomus thermophilum H-6-12.</title>
        <authorList>
            <person name="Coil D.A."/>
            <person name="Badger J.H."/>
            <person name="Forberger H.C."/>
            <person name="Riggs F."/>
            <person name="Madupu R."/>
            <person name="Fedorova N."/>
            <person name="Ward N."/>
            <person name="Robb F.T."/>
            <person name="Eisen J.A."/>
        </authorList>
    </citation>
    <scope>NUCLEOTIDE SEQUENCE [LARGE SCALE GENOMIC DNA]</scope>
    <source>
        <strain>ATCC 35947 / DSM 3960 / H-6-12</strain>
    </source>
</reference>
<sequence>MRKFFGTDGIRGIVNEILTPELAYKLSRAIIGYFKDVKKKKVIIGSDTRNSKDMLKSALIAGFTSGGMDILDVGVVSTPSLSYLVKKYDDVLLGIMISASHNPVEYNGIKIFKSDGFKLEDNVEATIEEYILREDDYFRASPREIGVIYNFTQALEDYKNYLKEIIGEDFRGYKIMLDCAFGSLSEIAPTVFKELGAEVIAYNTNYNGININDNCGAVYPEIGRNLFLKSGAHIGFTYDGDGDRVIAFSEDGEIVDGDVLIGIFAKYLKERGLLRGNKIVGTVMTNLGLEEYLKRLGIGLIRAKVGDRYVLEEILKNNLNLGGETSGHIILFDYMPTGDGLLTSLFLLKILKERGIKLSDLAKEIRIFPQVHEKIHIKDIYITEEDEKEFRGIAEEVINGKNIRYIVRKSGTEPVIRITVEGDVPKEDLTNIALEIKNRIIDFLRRSKRQDLPSKGVS</sequence>
<feature type="chain" id="PRO_1000201087" description="Phosphoglucosamine mutase">
    <location>
        <begin position="1"/>
        <end position="458"/>
    </location>
</feature>
<feature type="active site" description="Phosphoserine intermediate" evidence="1">
    <location>
        <position position="100"/>
    </location>
</feature>
<feature type="binding site" description="via phosphate group" evidence="1">
    <location>
        <position position="100"/>
    </location>
    <ligand>
        <name>Mg(2+)</name>
        <dbReference type="ChEBI" id="CHEBI:18420"/>
    </ligand>
</feature>
<feature type="binding site" evidence="1">
    <location>
        <position position="239"/>
    </location>
    <ligand>
        <name>Mg(2+)</name>
        <dbReference type="ChEBI" id="CHEBI:18420"/>
    </ligand>
</feature>
<feature type="binding site" evidence="1">
    <location>
        <position position="241"/>
    </location>
    <ligand>
        <name>Mg(2+)</name>
        <dbReference type="ChEBI" id="CHEBI:18420"/>
    </ligand>
</feature>
<feature type="binding site" evidence="1">
    <location>
        <position position="243"/>
    </location>
    <ligand>
        <name>Mg(2+)</name>
        <dbReference type="ChEBI" id="CHEBI:18420"/>
    </ligand>
</feature>
<feature type="modified residue" description="Phosphoserine" evidence="1">
    <location>
        <position position="100"/>
    </location>
</feature>
<proteinExistence type="inferred from homology"/>
<accession>B5YDY1</accession>
<name>GLMM_DICT6</name>